<gene>
    <name evidence="1" type="primary">nqrD</name>
    <name type="ordered locus">PLES_20661</name>
</gene>
<keyword id="KW-0997">Cell inner membrane</keyword>
<keyword id="KW-1003">Cell membrane</keyword>
<keyword id="KW-0406">Ion transport</keyword>
<keyword id="KW-0472">Membrane</keyword>
<keyword id="KW-0520">NAD</keyword>
<keyword id="KW-0915">Sodium</keyword>
<keyword id="KW-0739">Sodium transport</keyword>
<keyword id="KW-1278">Translocase</keyword>
<keyword id="KW-0812">Transmembrane</keyword>
<keyword id="KW-1133">Transmembrane helix</keyword>
<keyword id="KW-0813">Transport</keyword>
<keyword id="KW-0830">Ubiquinone</keyword>
<comment type="function">
    <text evidence="1">NQR complex catalyzes the reduction of ubiquinone-1 to ubiquinol by two successive reactions, coupled with the transport of Na(+) ions from the cytoplasm to the periplasm. NqrA to NqrE are probably involved in the second step, the conversion of ubisemiquinone to ubiquinol.</text>
</comment>
<comment type="catalytic activity">
    <reaction evidence="1">
        <text>a ubiquinone + n Na(+)(in) + NADH + H(+) = a ubiquinol + n Na(+)(out) + NAD(+)</text>
        <dbReference type="Rhea" id="RHEA:47748"/>
        <dbReference type="Rhea" id="RHEA-COMP:9565"/>
        <dbReference type="Rhea" id="RHEA-COMP:9566"/>
        <dbReference type="ChEBI" id="CHEBI:15378"/>
        <dbReference type="ChEBI" id="CHEBI:16389"/>
        <dbReference type="ChEBI" id="CHEBI:17976"/>
        <dbReference type="ChEBI" id="CHEBI:29101"/>
        <dbReference type="ChEBI" id="CHEBI:57540"/>
        <dbReference type="ChEBI" id="CHEBI:57945"/>
        <dbReference type="EC" id="7.2.1.1"/>
    </reaction>
</comment>
<comment type="subunit">
    <text evidence="1">Composed of six subunits; NqrA, NqrB, NqrC, NqrD, NqrE and NqrF.</text>
</comment>
<comment type="subcellular location">
    <subcellularLocation>
        <location evidence="1">Cell inner membrane</location>
        <topology evidence="1">Multi-pass membrane protein</topology>
    </subcellularLocation>
</comment>
<comment type="similarity">
    <text evidence="1">Belongs to the NqrDE/RnfAE family.</text>
</comment>
<proteinExistence type="inferred from homology"/>
<sequence>MMAAQPTIREVLFNPVFQNNPIGLQILGICSALAVTSNLKTATVMAIALTLVTGFSNLFISMIRRQIPSSIRMIVQMVIIASLVIVVDQVLKAYAYSLSKQLSVFVGLIITNCIVMGRAEAFAMANPPLVSFFDGIGNGLGYSAMLLVLGFVRELFGAGKLYGISVLPTVNDGGWYQPNGLLLLPPSAFFLIGLIIWALRTWKKDQVEAPTYKMAPQVSSKEAY</sequence>
<protein>
    <recommendedName>
        <fullName evidence="1">Na(+)-translocating NADH-quinone reductase subunit D</fullName>
        <shortName evidence="1">Na(+)-NQR subunit D</shortName>
        <shortName evidence="1">Na(+)-translocating NQR subunit D</shortName>
        <ecNumber evidence="1">7.2.1.1</ecNumber>
    </recommendedName>
    <alternativeName>
        <fullName evidence="1">NQR complex subunit D</fullName>
    </alternativeName>
    <alternativeName>
        <fullName evidence="1">NQR-1 subunit D</fullName>
    </alternativeName>
</protein>
<accession>B7UZU0</accession>
<organism>
    <name type="scientific">Pseudomonas aeruginosa (strain LESB58)</name>
    <dbReference type="NCBI Taxonomy" id="557722"/>
    <lineage>
        <taxon>Bacteria</taxon>
        <taxon>Pseudomonadati</taxon>
        <taxon>Pseudomonadota</taxon>
        <taxon>Gammaproteobacteria</taxon>
        <taxon>Pseudomonadales</taxon>
        <taxon>Pseudomonadaceae</taxon>
        <taxon>Pseudomonas</taxon>
    </lineage>
</organism>
<evidence type="ECO:0000255" key="1">
    <source>
        <dbReference type="HAMAP-Rule" id="MF_00428"/>
    </source>
</evidence>
<feature type="chain" id="PRO_1000191688" description="Na(+)-translocating NADH-quinone reductase subunit D">
    <location>
        <begin position="1"/>
        <end position="224"/>
    </location>
</feature>
<feature type="transmembrane region" description="Helical" evidence="1">
    <location>
        <begin position="43"/>
        <end position="63"/>
    </location>
</feature>
<feature type="transmembrane region" description="Helical" evidence="1">
    <location>
        <begin position="67"/>
        <end position="87"/>
    </location>
</feature>
<feature type="transmembrane region" description="Helical" evidence="1">
    <location>
        <begin position="104"/>
        <end position="124"/>
    </location>
</feature>
<feature type="transmembrane region" description="Helical" evidence="1">
    <location>
        <begin position="132"/>
        <end position="152"/>
    </location>
</feature>
<feature type="transmembrane region" description="Helical" evidence="1">
    <location>
        <begin position="179"/>
        <end position="199"/>
    </location>
</feature>
<dbReference type="EC" id="7.2.1.1" evidence="1"/>
<dbReference type="EMBL" id="FM209186">
    <property type="protein sequence ID" value="CAW26793.1"/>
    <property type="molecule type" value="Genomic_DNA"/>
</dbReference>
<dbReference type="RefSeq" id="WP_003119802.1">
    <property type="nucleotide sequence ID" value="NC_011770.1"/>
</dbReference>
<dbReference type="SMR" id="B7UZU0"/>
<dbReference type="KEGG" id="pag:PLES_20661"/>
<dbReference type="HOGENOM" id="CLU_046659_1_1_6"/>
<dbReference type="GO" id="GO:0005886">
    <property type="term" value="C:plasma membrane"/>
    <property type="evidence" value="ECO:0007669"/>
    <property type="project" value="UniProtKB-SubCell"/>
</dbReference>
<dbReference type="GO" id="GO:0016655">
    <property type="term" value="F:oxidoreductase activity, acting on NAD(P)H, quinone or similar compound as acceptor"/>
    <property type="evidence" value="ECO:0007669"/>
    <property type="project" value="UniProtKB-UniRule"/>
</dbReference>
<dbReference type="GO" id="GO:0006814">
    <property type="term" value="P:sodium ion transport"/>
    <property type="evidence" value="ECO:0007669"/>
    <property type="project" value="UniProtKB-UniRule"/>
</dbReference>
<dbReference type="HAMAP" id="MF_00428">
    <property type="entry name" value="NqrD"/>
    <property type="match status" value="1"/>
</dbReference>
<dbReference type="InterPro" id="IPR011292">
    <property type="entry name" value="NqrD"/>
</dbReference>
<dbReference type="InterPro" id="IPR003667">
    <property type="entry name" value="NqrDE/RnfAE"/>
</dbReference>
<dbReference type="NCBIfam" id="TIGR01939">
    <property type="entry name" value="nqrD"/>
    <property type="match status" value="1"/>
</dbReference>
<dbReference type="NCBIfam" id="NF006777">
    <property type="entry name" value="PRK09292.1"/>
    <property type="match status" value="1"/>
</dbReference>
<dbReference type="NCBIfam" id="NF009070">
    <property type="entry name" value="PRK12405.1"/>
    <property type="match status" value="1"/>
</dbReference>
<dbReference type="PANTHER" id="PTHR30586">
    <property type="entry name" value="ELECTRON TRANSPORT COMPLEX PROTEIN RNFE"/>
    <property type="match status" value="1"/>
</dbReference>
<dbReference type="PANTHER" id="PTHR30586:SF1">
    <property type="entry name" value="NA(+)-TRANSLOCATING NADH-QUINONE REDUCTASE SUBUNIT D"/>
    <property type="match status" value="1"/>
</dbReference>
<dbReference type="Pfam" id="PF02508">
    <property type="entry name" value="Rnf-Nqr"/>
    <property type="match status" value="1"/>
</dbReference>
<dbReference type="PIRSF" id="PIRSF006102">
    <property type="entry name" value="NQR_DE"/>
    <property type="match status" value="1"/>
</dbReference>
<reference key="1">
    <citation type="journal article" date="2009" name="Genome Res.">
        <title>Newly introduced genomic prophage islands are critical determinants of in vivo competitiveness in the Liverpool epidemic strain of Pseudomonas aeruginosa.</title>
        <authorList>
            <person name="Winstanley C."/>
            <person name="Langille M.G.I."/>
            <person name="Fothergill J.L."/>
            <person name="Kukavica-Ibrulj I."/>
            <person name="Paradis-Bleau C."/>
            <person name="Sanschagrin F."/>
            <person name="Thomson N.R."/>
            <person name="Winsor G.L."/>
            <person name="Quail M.A."/>
            <person name="Lennard N."/>
            <person name="Bignell A."/>
            <person name="Clarke L."/>
            <person name="Seeger K."/>
            <person name="Saunders D."/>
            <person name="Harris D."/>
            <person name="Parkhill J."/>
            <person name="Hancock R.E.W."/>
            <person name="Brinkman F.S.L."/>
            <person name="Levesque R.C."/>
        </authorList>
    </citation>
    <scope>NUCLEOTIDE SEQUENCE [LARGE SCALE GENOMIC DNA]</scope>
    <source>
        <strain>LESB58</strain>
    </source>
</reference>
<name>NQRD_PSEA8</name>